<name>RPOA_BORPD</name>
<organism>
    <name type="scientific">Bordetella petrii (strain ATCC BAA-461 / DSM 12804 / CCUG 43448)</name>
    <dbReference type="NCBI Taxonomy" id="340100"/>
    <lineage>
        <taxon>Bacteria</taxon>
        <taxon>Pseudomonadati</taxon>
        <taxon>Pseudomonadota</taxon>
        <taxon>Betaproteobacteria</taxon>
        <taxon>Burkholderiales</taxon>
        <taxon>Alcaligenaceae</taxon>
        <taxon>Bordetella</taxon>
    </lineage>
</organism>
<comment type="function">
    <text evidence="1">DNA-dependent RNA polymerase catalyzes the transcription of DNA into RNA using the four ribonucleoside triphosphates as substrates.</text>
</comment>
<comment type="catalytic activity">
    <reaction evidence="1">
        <text>RNA(n) + a ribonucleoside 5'-triphosphate = RNA(n+1) + diphosphate</text>
        <dbReference type="Rhea" id="RHEA:21248"/>
        <dbReference type="Rhea" id="RHEA-COMP:14527"/>
        <dbReference type="Rhea" id="RHEA-COMP:17342"/>
        <dbReference type="ChEBI" id="CHEBI:33019"/>
        <dbReference type="ChEBI" id="CHEBI:61557"/>
        <dbReference type="ChEBI" id="CHEBI:140395"/>
        <dbReference type="EC" id="2.7.7.6"/>
    </reaction>
</comment>
<comment type="subunit">
    <text evidence="1">Homodimer. The RNAP catalytic core consists of 2 alpha, 1 beta, 1 beta' and 1 omega subunit. When a sigma factor is associated with the core the holoenzyme is formed, which can initiate transcription.</text>
</comment>
<comment type="domain">
    <text evidence="1">The N-terminal domain is essential for RNAP assembly and basal transcription, whereas the C-terminal domain is involved in interaction with transcriptional regulators and with upstream promoter elements.</text>
</comment>
<comment type="similarity">
    <text evidence="1">Belongs to the RNA polymerase alpha chain family.</text>
</comment>
<dbReference type="EC" id="2.7.7.6" evidence="1"/>
<dbReference type="EMBL" id="AM902716">
    <property type="protein sequence ID" value="CAP45276.1"/>
    <property type="molecule type" value="Genomic_DNA"/>
</dbReference>
<dbReference type="SMR" id="A9IHR6"/>
<dbReference type="STRING" id="94624.Bpet4924"/>
<dbReference type="KEGG" id="bpt:Bpet4924"/>
<dbReference type="eggNOG" id="COG0202">
    <property type="taxonomic scope" value="Bacteria"/>
</dbReference>
<dbReference type="Proteomes" id="UP000001225">
    <property type="component" value="Chromosome"/>
</dbReference>
<dbReference type="GO" id="GO:0005737">
    <property type="term" value="C:cytoplasm"/>
    <property type="evidence" value="ECO:0007669"/>
    <property type="project" value="UniProtKB-ARBA"/>
</dbReference>
<dbReference type="GO" id="GO:0000428">
    <property type="term" value="C:DNA-directed RNA polymerase complex"/>
    <property type="evidence" value="ECO:0007669"/>
    <property type="project" value="UniProtKB-KW"/>
</dbReference>
<dbReference type="GO" id="GO:0003677">
    <property type="term" value="F:DNA binding"/>
    <property type="evidence" value="ECO:0007669"/>
    <property type="project" value="UniProtKB-UniRule"/>
</dbReference>
<dbReference type="GO" id="GO:0003899">
    <property type="term" value="F:DNA-directed RNA polymerase activity"/>
    <property type="evidence" value="ECO:0007669"/>
    <property type="project" value="UniProtKB-UniRule"/>
</dbReference>
<dbReference type="GO" id="GO:0046983">
    <property type="term" value="F:protein dimerization activity"/>
    <property type="evidence" value="ECO:0007669"/>
    <property type="project" value="InterPro"/>
</dbReference>
<dbReference type="GO" id="GO:0006351">
    <property type="term" value="P:DNA-templated transcription"/>
    <property type="evidence" value="ECO:0007669"/>
    <property type="project" value="UniProtKB-UniRule"/>
</dbReference>
<dbReference type="CDD" id="cd06928">
    <property type="entry name" value="RNAP_alpha_NTD"/>
    <property type="match status" value="1"/>
</dbReference>
<dbReference type="FunFam" id="1.10.150.20:FF:000001">
    <property type="entry name" value="DNA-directed RNA polymerase subunit alpha"/>
    <property type="match status" value="1"/>
</dbReference>
<dbReference type="FunFam" id="2.170.120.12:FF:000001">
    <property type="entry name" value="DNA-directed RNA polymerase subunit alpha"/>
    <property type="match status" value="1"/>
</dbReference>
<dbReference type="Gene3D" id="1.10.150.20">
    <property type="entry name" value="5' to 3' exonuclease, C-terminal subdomain"/>
    <property type="match status" value="1"/>
</dbReference>
<dbReference type="Gene3D" id="2.170.120.12">
    <property type="entry name" value="DNA-directed RNA polymerase, insert domain"/>
    <property type="match status" value="1"/>
</dbReference>
<dbReference type="Gene3D" id="3.30.1360.10">
    <property type="entry name" value="RNA polymerase, RBP11-like subunit"/>
    <property type="match status" value="1"/>
</dbReference>
<dbReference type="HAMAP" id="MF_00059">
    <property type="entry name" value="RNApol_bact_RpoA"/>
    <property type="match status" value="1"/>
</dbReference>
<dbReference type="InterPro" id="IPR011262">
    <property type="entry name" value="DNA-dir_RNA_pol_insert"/>
</dbReference>
<dbReference type="InterPro" id="IPR011263">
    <property type="entry name" value="DNA-dir_RNA_pol_RpoA/D/Rpb3"/>
</dbReference>
<dbReference type="InterPro" id="IPR011773">
    <property type="entry name" value="DNA-dir_RpoA"/>
</dbReference>
<dbReference type="InterPro" id="IPR036603">
    <property type="entry name" value="RBP11-like"/>
</dbReference>
<dbReference type="InterPro" id="IPR011260">
    <property type="entry name" value="RNAP_asu_C"/>
</dbReference>
<dbReference type="InterPro" id="IPR036643">
    <property type="entry name" value="RNApol_insert_sf"/>
</dbReference>
<dbReference type="NCBIfam" id="NF003513">
    <property type="entry name" value="PRK05182.1-2"/>
    <property type="match status" value="1"/>
</dbReference>
<dbReference type="NCBIfam" id="NF003519">
    <property type="entry name" value="PRK05182.2-5"/>
    <property type="match status" value="1"/>
</dbReference>
<dbReference type="NCBIfam" id="TIGR02027">
    <property type="entry name" value="rpoA"/>
    <property type="match status" value="1"/>
</dbReference>
<dbReference type="Pfam" id="PF01000">
    <property type="entry name" value="RNA_pol_A_bac"/>
    <property type="match status" value="1"/>
</dbReference>
<dbReference type="Pfam" id="PF03118">
    <property type="entry name" value="RNA_pol_A_CTD"/>
    <property type="match status" value="1"/>
</dbReference>
<dbReference type="Pfam" id="PF01193">
    <property type="entry name" value="RNA_pol_L"/>
    <property type="match status" value="1"/>
</dbReference>
<dbReference type="SMART" id="SM00662">
    <property type="entry name" value="RPOLD"/>
    <property type="match status" value="1"/>
</dbReference>
<dbReference type="SUPFAM" id="SSF47789">
    <property type="entry name" value="C-terminal domain of RNA polymerase alpha subunit"/>
    <property type="match status" value="1"/>
</dbReference>
<dbReference type="SUPFAM" id="SSF56553">
    <property type="entry name" value="Insert subdomain of RNA polymerase alpha subunit"/>
    <property type="match status" value="1"/>
</dbReference>
<dbReference type="SUPFAM" id="SSF55257">
    <property type="entry name" value="RBP11-like subunits of RNA polymerase"/>
    <property type="match status" value="1"/>
</dbReference>
<keyword id="KW-0240">DNA-directed RNA polymerase</keyword>
<keyword id="KW-0548">Nucleotidyltransferase</keyword>
<keyword id="KW-0804">Transcription</keyword>
<keyword id="KW-0808">Transferase</keyword>
<feature type="chain" id="PRO_1000091923" description="DNA-directed RNA polymerase subunit alpha">
    <location>
        <begin position="1"/>
        <end position="328"/>
    </location>
</feature>
<feature type="region of interest" description="Alpha N-terminal domain (alpha-NTD)" evidence="1">
    <location>
        <begin position="1"/>
        <end position="232"/>
    </location>
</feature>
<feature type="region of interest" description="Alpha C-terminal domain (alpha-CTD)" evidence="1">
    <location>
        <begin position="248"/>
        <end position="328"/>
    </location>
</feature>
<gene>
    <name evidence="1" type="primary">rpoA</name>
    <name type="ordered locus">Bpet4924</name>
</gene>
<evidence type="ECO:0000255" key="1">
    <source>
        <dbReference type="HAMAP-Rule" id="MF_00059"/>
    </source>
</evidence>
<sequence length="328" mass="36265">MSTQGFLKPRSIEVEPVGTHHAKIVMEPFERGYGHTLGNALRRILLSSMTGYAPTEVQMTGVVHEYSTIPGVREDVVDILLNLKGVVFKLHNRDEVTLVLRKNGAGTVVASDIELPHDVEIINPDHLICNLTEAGKVEMQIKVEKGRGYVPGNVRALSEDRTHTIGRIVLDASFSPVRRVSYAVESARVEQRTDLDKLVLDIETNGVISPEEAVRQSARILMDQISVFAALEGAGDSYEAPVRGTPQIDPVLLRPVDDLELTVRSANCLKAENIYYIGDLIQRTENELLKTPNLGRKSLNEIKEVLAARGLTLGMKLENWPPLGLERP</sequence>
<reference key="1">
    <citation type="journal article" date="2008" name="BMC Genomics">
        <title>The missing link: Bordetella petrii is endowed with both the metabolic versatility of environmental bacteria and virulence traits of pathogenic Bordetellae.</title>
        <authorList>
            <person name="Gross R."/>
            <person name="Guzman C.A."/>
            <person name="Sebaihia M."/>
            <person name="Martin dos Santos V.A.P."/>
            <person name="Pieper D.H."/>
            <person name="Koebnik R."/>
            <person name="Lechner M."/>
            <person name="Bartels D."/>
            <person name="Buhrmester J."/>
            <person name="Choudhuri J.V."/>
            <person name="Ebensen T."/>
            <person name="Gaigalat L."/>
            <person name="Herrmann S."/>
            <person name="Khachane A.N."/>
            <person name="Larisch C."/>
            <person name="Link S."/>
            <person name="Linke B."/>
            <person name="Meyer F."/>
            <person name="Mormann S."/>
            <person name="Nakunst D."/>
            <person name="Rueckert C."/>
            <person name="Schneiker-Bekel S."/>
            <person name="Schulze K."/>
            <person name="Voerholter F.-J."/>
            <person name="Yevsa T."/>
            <person name="Engle J.T."/>
            <person name="Goldman W.E."/>
            <person name="Puehler A."/>
            <person name="Goebel U.B."/>
            <person name="Goesmann A."/>
            <person name="Bloecker H."/>
            <person name="Kaiser O."/>
            <person name="Martinez-Arias R."/>
        </authorList>
    </citation>
    <scope>NUCLEOTIDE SEQUENCE [LARGE SCALE GENOMIC DNA]</scope>
    <source>
        <strain>ATCC BAA-461 / DSM 12804 / CCUG 43448</strain>
    </source>
</reference>
<protein>
    <recommendedName>
        <fullName evidence="1">DNA-directed RNA polymerase subunit alpha</fullName>
        <shortName evidence="1">RNAP subunit alpha</shortName>
        <ecNumber evidence="1">2.7.7.6</ecNumber>
    </recommendedName>
    <alternativeName>
        <fullName evidence="1">RNA polymerase subunit alpha</fullName>
    </alternativeName>
    <alternativeName>
        <fullName evidence="1">Transcriptase subunit alpha</fullName>
    </alternativeName>
</protein>
<accession>A9IHR6</accession>
<proteinExistence type="inferred from homology"/>